<evidence type="ECO:0000255" key="1">
    <source>
        <dbReference type="HAMAP-Rule" id="MF_01601"/>
    </source>
</evidence>
<evidence type="ECO:0000305" key="2"/>
<protein>
    <recommendedName>
        <fullName evidence="1">ADP-L-glycero-D-manno-heptose-6-epimerase</fullName>
        <ecNumber evidence="1">5.1.3.20</ecNumber>
    </recommendedName>
    <alternativeName>
        <fullName evidence="1">ADP-L-glycero-beta-D-manno-heptose-6-epimerase</fullName>
        <shortName evidence="1">ADP-glyceromanno-heptose 6-epimerase</shortName>
        <shortName evidence="1">ADP-hep 6-epimerase</shortName>
        <shortName evidence="1">AGME</shortName>
    </alternativeName>
</protein>
<organism>
    <name type="scientific">Chromohalobacter salexigens (strain ATCC BAA-138 / DSM 3043 / CIP 106854 / NCIMB 13768 / 1H11)</name>
    <dbReference type="NCBI Taxonomy" id="290398"/>
    <lineage>
        <taxon>Bacteria</taxon>
        <taxon>Pseudomonadati</taxon>
        <taxon>Pseudomonadota</taxon>
        <taxon>Gammaproteobacteria</taxon>
        <taxon>Oceanospirillales</taxon>
        <taxon>Halomonadaceae</taxon>
        <taxon>Chromohalobacter</taxon>
    </lineage>
</organism>
<dbReference type="EC" id="5.1.3.20" evidence="1"/>
<dbReference type="EMBL" id="CP000285">
    <property type="protein sequence ID" value="ABE57373.1"/>
    <property type="status" value="ALT_INIT"/>
    <property type="molecule type" value="Genomic_DNA"/>
</dbReference>
<dbReference type="RefSeq" id="WP_035414067.1">
    <property type="nucleotide sequence ID" value="NC_007963.1"/>
</dbReference>
<dbReference type="SMR" id="Q1R1N5"/>
<dbReference type="STRING" id="290398.Csal_0008"/>
<dbReference type="GeneID" id="95332761"/>
<dbReference type="KEGG" id="csa:Csal_0008"/>
<dbReference type="eggNOG" id="COG0451">
    <property type="taxonomic scope" value="Bacteria"/>
</dbReference>
<dbReference type="HOGENOM" id="CLU_007383_1_3_6"/>
<dbReference type="OrthoDB" id="9803010at2"/>
<dbReference type="UniPathway" id="UPA00356">
    <property type="reaction ID" value="UER00440"/>
</dbReference>
<dbReference type="Proteomes" id="UP000000239">
    <property type="component" value="Chromosome"/>
</dbReference>
<dbReference type="GO" id="GO:0008712">
    <property type="term" value="F:ADP-glyceromanno-heptose 6-epimerase activity"/>
    <property type="evidence" value="ECO:0007669"/>
    <property type="project" value="UniProtKB-UniRule"/>
</dbReference>
<dbReference type="GO" id="GO:0050661">
    <property type="term" value="F:NADP binding"/>
    <property type="evidence" value="ECO:0007669"/>
    <property type="project" value="InterPro"/>
</dbReference>
<dbReference type="GO" id="GO:0097171">
    <property type="term" value="P:ADP-L-glycero-beta-D-manno-heptose biosynthetic process"/>
    <property type="evidence" value="ECO:0007669"/>
    <property type="project" value="UniProtKB-UniPathway"/>
</dbReference>
<dbReference type="GO" id="GO:0005975">
    <property type="term" value="P:carbohydrate metabolic process"/>
    <property type="evidence" value="ECO:0007669"/>
    <property type="project" value="UniProtKB-UniRule"/>
</dbReference>
<dbReference type="CDD" id="cd05248">
    <property type="entry name" value="ADP_GME_SDR_e"/>
    <property type="match status" value="1"/>
</dbReference>
<dbReference type="Gene3D" id="3.40.50.720">
    <property type="entry name" value="NAD(P)-binding Rossmann-like Domain"/>
    <property type="match status" value="1"/>
</dbReference>
<dbReference type="Gene3D" id="3.90.25.10">
    <property type="entry name" value="UDP-galactose 4-epimerase, domain 1"/>
    <property type="match status" value="1"/>
</dbReference>
<dbReference type="HAMAP" id="MF_01601">
    <property type="entry name" value="Heptose_epimerase"/>
    <property type="match status" value="1"/>
</dbReference>
<dbReference type="InterPro" id="IPR001509">
    <property type="entry name" value="Epimerase_deHydtase"/>
</dbReference>
<dbReference type="InterPro" id="IPR011912">
    <property type="entry name" value="Heptose_epim"/>
</dbReference>
<dbReference type="InterPro" id="IPR036291">
    <property type="entry name" value="NAD(P)-bd_dom_sf"/>
</dbReference>
<dbReference type="NCBIfam" id="TIGR02197">
    <property type="entry name" value="heptose_epim"/>
    <property type="match status" value="1"/>
</dbReference>
<dbReference type="NCBIfam" id="NF008360">
    <property type="entry name" value="PRK11150.1"/>
    <property type="match status" value="1"/>
</dbReference>
<dbReference type="PANTHER" id="PTHR43103:SF3">
    <property type="entry name" value="ADP-L-GLYCERO-D-MANNO-HEPTOSE-6-EPIMERASE"/>
    <property type="match status" value="1"/>
</dbReference>
<dbReference type="PANTHER" id="PTHR43103">
    <property type="entry name" value="NUCLEOSIDE-DIPHOSPHATE-SUGAR EPIMERASE"/>
    <property type="match status" value="1"/>
</dbReference>
<dbReference type="Pfam" id="PF01370">
    <property type="entry name" value="Epimerase"/>
    <property type="match status" value="1"/>
</dbReference>
<dbReference type="SUPFAM" id="SSF51735">
    <property type="entry name" value="NAD(P)-binding Rossmann-fold domains"/>
    <property type="match status" value="1"/>
</dbReference>
<feature type="chain" id="PRO_0000255726" description="ADP-L-glycero-D-manno-heptose-6-epimerase">
    <location>
        <begin position="1"/>
        <end position="318"/>
    </location>
</feature>
<feature type="active site" description="Proton acceptor" evidence="1">
    <location>
        <position position="144"/>
    </location>
</feature>
<feature type="active site" description="Proton acceptor" evidence="1">
    <location>
        <position position="182"/>
    </location>
</feature>
<feature type="binding site" evidence="1">
    <location>
        <begin position="10"/>
        <end position="11"/>
    </location>
    <ligand>
        <name>NADP(+)</name>
        <dbReference type="ChEBI" id="CHEBI:58349"/>
    </ligand>
</feature>
<feature type="binding site" evidence="1">
    <location>
        <begin position="31"/>
        <end position="32"/>
    </location>
    <ligand>
        <name>NADP(+)</name>
        <dbReference type="ChEBI" id="CHEBI:58349"/>
    </ligand>
</feature>
<feature type="binding site" evidence="1">
    <location>
        <position position="38"/>
    </location>
    <ligand>
        <name>NADP(+)</name>
        <dbReference type="ChEBI" id="CHEBI:58349"/>
    </ligand>
</feature>
<feature type="binding site" evidence="1">
    <location>
        <position position="53"/>
    </location>
    <ligand>
        <name>NADP(+)</name>
        <dbReference type="ChEBI" id="CHEBI:58349"/>
    </ligand>
</feature>
<feature type="binding site" evidence="1">
    <location>
        <begin position="80"/>
        <end position="84"/>
    </location>
    <ligand>
        <name>NADP(+)</name>
        <dbReference type="ChEBI" id="CHEBI:58349"/>
    </ligand>
</feature>
<feature type="binding site" evidence="1">
    <location>
        <position position="97"/>
    </location>
    <ligand>
        <name>NADP(+)</name>
        <dbReference type="ChEBI" id="CHEBI:58349"/>
    </ligand>
</feature>
<feature type="binding site" evidence="1">
    <location>
        <position position="148"/>
    </location>
    <ligand>
        <name>NADP(+)</name>
        <dbReference type="ChEBI" id="CHEBI:58349"/>
    </ligand>
</feature>
<feature type="binding site" evidence="1">
    <location>
        <position position="173"/>
    </location>
    <ligand>
        <name>substrate</name>
    </ligand>
</feature>
<feature type="binding site" evidence="1">
    <location>
        <position position="174"/>
    </location>
    <ligand>
        <name>NADP(+)</name>
        <dbReference type="ChEBI" id="CHEBI:58349"/>
    </ligand>
</feature>
<feature type="binding site" evidence="1">
    <location>
        <position position="182"/>
    </location>
    <ligand>
        <name>NADP(+)</name>
        <dbReference type="ChEBI" id="CHEBI:58349"/>
    </ligand>
</feature>
<feature type="binding site" evidence="1">
    <location>
        <position position="184"/>
    </location>
    <ligand>
        <name>substrate</name>
    </ligand>
</feature>
<feature type="binding site" evidence="1">
    <location>
        <position position="191"/>
    </location>
    <ligand>
        <name>substrate</name>
    </ligand>
</feature>
<feature type="binding site" evidence="1">
    <location>
        <begin position="205"/>
        <end position="208"/>
    </location>
    <ligand>
        <name>substrate</name>
    </ligand>
</feature>
<feature type="binding site" evidence="1">
    <location>
        <position position="218"/>
    </location>
    <ligand>
        <name>substrate</name>
    </ligand>
</feature>
<feature type="binding site" evidence="1">
    <location>
        <position position="282"/>
    </location>
    <ligand>
        <name>substrate</name>
    </ligand>
</feature>
<sequence>MIVVTGGAGFIGANLVKALNARGREDVLVVDDLSDGTKFVNLADCTLGDYLDKDDFLARVKAELRGEPSELPPIEAIFHEGACSDTTEWDGKFMLENNFEYSKVLLHFCQYKRIPFLYASSAATYGGSEVFVEAPEHEKPLNVYGYSKLLFDQYVRVHWESFDAQVVGFRYFNVYGPREQHKGKMASVAYHHHSQVKRGENPKLFGAWDGYEAGMQSRDFVYVGDVVDVNLWCLDHPEVSGIFNLGTGRAEPFKAIAETVIDYYATGKIDYIDFPEELKGRYQSYTRADISRLREAGYKAEFKTVREGVSAYLDWLNG</sequence>
<reference key="1">
    <citation type="journal article" date="2011" name="Stand. Genomic Sci.">
        <title>Complete genome sequence of the halophilic and highly halotolerant Chromohalobacter salexigens type strain (1H11(T)).</title>
        <authorList>
            <person name="Copeland A."/>
            <person name="O'Connor K."/>
            <person name="Lucas S."/>
            <person name="Lapidus A."/>
            <person name="Berry K.W."/>
            <person name="Detter J.C."/>
            <person name="Del Rio T.G."/>
            <person name="Hammon N."/>
            <person name="Dalin E."/>
            <person name="Tice H."/>
            <person name="Pitluck S."/>
            <person name="Bruce D."/>
            <person name="Goodwin L."/>
            <person name="Han C."/>
            <person name="Tapia R."/>
            <person name="Saunders E."/>
            <person name="Schmutz J."/>
            <person name="Brettin T."/>
            <person name="Larimer F."/>
            <person name="Land M."/>
            <person name="Hauser L."/>
            <person name="Vargas C."/>
            <person name="Nieto J.J."/>
            <person name="Kyrpides N.C."/>
            <person name="Ivanova N."/>
            <person name="Goker M."/>
            <person name="Klenk H.P."/>
            <person name="Csonka L.N."/>
            <person name="Woyke T."/>
        </authorList>
    </citation>
    <scope>NUCLEOTIDE SEQUENCE [LARGE SCALE GENOMIC DNA]</scope>
    <source>
        <strain>ATCC BAA-138 / DSM 3043 / CIP 106854 / NCIMB 13768 / 1H11</strain>
    </source>
</reference>
<gene>
    <name evidence="1" type="primary">hldD</name>
    <name type="ordered locus">Csal_0008</name>
</gene>
<accession>Q1R1N5</accession>
<proteinExistence type="inferred from homology"/>
<comment type="function">
    <text evidence="1">Catalyzes the interconversion between ADP-D-glycero-beta-D-manno-heptose and ADP-L-glycero-beta-D-manno-heptose via an epimerization at carbon 6 of the heptose.</text>
</comment>
<comment type="catalytic activity">
    <reaction evidence="1">
        <text>ADP-D-glycero-beta-D-manno-heptose = ADP-L-glycero-beta-D-manno-heptose</text>
        <dbReference type="Rhea" id="RHEA:17577"/>
        <dbReference type="ChEBI" id="CHEBI:59967"/>
        <dbReference type="ChEBI" id="CHEBI:61506"/>
        <dbReference type="EC" id="5.1.3.20"/>
    </reaction>
</comment>
<comment type="cofactor">
    <cofactor evidence="1">
        <name>NADP(+)</name>
        <dbReference type="ChEBI" id="CHEBI:58349"/>
    </cofactor>
    <text evidence="1">Binds 1 NADP(+) per subunit.</text>
</comment>
<comment type="pathway">
    <text evidence="1">Nucleotide-sugar biosynthesis; ADP-L-glycero-beta-D-manno-heptose biosynthesis; ADP-L-glycero-beta-D-manno-heptose from D-glycero-beta-D-manno-heptose 7-phosphate: step 4/4.</text>
</comment>
<comment type="subunit">
    <text evidence="1">Homopentamer.</text>
</comment>
<comment type="domain">
    <text evidence="1">Contains a large N-terminal NADP-binding domain, and a smaller C-terminal substrate-binding domain.</text>
</comment>
<comment type="similarity">
    <text evidence="1">Belongs to the NAD(P)-dependent epimerase/dehydratase family. HldD subfamily.</text>
</comment>
<comment type="sequence caution" evidence="2">
    <conflict type="erroneous initiation">
        <sequence resource="EMBL-CDS" id="ABE57373"/>
    </conflict>
</comment>
<name>HLDD_CHRSD</name>
<keyword id="KW-0119">Carbohydrate metabolism</keyword>
<keyword id="KW-0413">Isomerase</keyword>
<keyword id="KW-0521">NADP</keyword>
<keyword id="KW-1185">Reference proteome</keyword>